<dbReference type="EMBL" id="AJ749949">
    <property type="protein sequence ID" value="CAG44976.1"/>
    <property type="molecule type" value="Genomic_DNA"/>
</dbReference>
<dbReference type="RefSeq" id="WP_003014363.1">
    <property type="nucleotide sequence ID" value="NZ_CP010290.1"/>
</dbReference>
<dbReference type="RefSeq" id="YP_169392.1">
    <property type="nucleotide sequence ID" value="NC_006570.2"/>
</dbReference>
<dbReference type="SMR" id="Q5NHV0"/>
<dbReference type="STRING" id="177416.FTT_0343"/>
<dbReference type="DNASU" id="3191991"/>
<dbReference type="EnsemblBacteria" id="CAG44976">
    <property type="protein sequence ID" value="CAG44976"/>
    <property type="gene ID" value="FTT_0343"/>
</dbReference>
<dbReference type="GeneID" id="75264243"/>
<dbReference type="KEGG" id="ftu:FTT_0343"/>
<dbReference type="eggNOG" id="COG1841">
    <property type="taxonomic scope" value="Bacteria"/>
</dbReference>
<dbReference type="OrthoDB" id="9812790at2"/>
<dbReference type="Proteomes" id="UP000001174">
    <property type="component" value="Chromosome"/>
</dbReference>
<dbReference type="GO" id="GO:0022625">
    <property type="term" value="C:cytosolic large ribosomal subunit"/>
    <property type="evidence" value="ECO:0007669"/>
    <property type="project" value="TreeGrafter"/>
</dbReference>
<dbReference type="GO" id="GO:0003735">
    <property type="term" value="F:structural constituent of ribosome"/>
    <property type="evidence" value="ECO:0007669"/>
    <property type="project" value="InterPro"/>
</dbReference>
<dbReference type="GO" id="GO:0006412">
    <property type="term" value="P:translation"/>
    <property type="evidence" value="ECO:0007669"/>
    <property type="project" value="UniProtKB-UniRule"/>
</dbReference>
<dbReference type="CDD" id="cd01658">
    <property type="entry name" value="Ribosomal_L30"/>
    <property type="match status" value="1"/>
</dbReference>
<dbReference type="FunFam" id="3.30.1390.20:FF:000001">
    <property type="entry name" value="50S ribosomal protein L30"/>
    <property type="match status" value="1"/>
</dbReference>
<dbReference type="Gene3D" id="3.30.1390.20">
    <property type="entry name" value="Ribosomal protein L30, ferredoxin-like fold domain"/>
    <property type="match status" value="1"/>
</dbReference>
<dbReference type="HAMAP" id="MF_01371_B">
    <property type="entry name" value="Ribosomal_uL30_B"/>
    <property type="match status" value="1"/>
</dbReference>
<dbReference type="InterPro" id="IPR036919">
    <property type="entry name" value="Ribo_uL30_ferredoxin-like_sf"/>
</dbReference>
<dbReference type="InterPro" id="IPR005996">
    <property type="entry name" value="Ribosomal_uL30_bac-type"/>
</dbReference>
<dbReference type="InterPro" id="IPR016082">
    <property type="entry name" value="Ribosomal_uL30_ferredoxin-like"/>
</dbReference>
<dbReference type="NCBIfam" id="TIGR01308">
    <property type="entry name" value="rpmD_bact"/>
    <property type="match status" value="1"/>
</dbReference>
<dbReference type="PANTHER" id="PTHR15892:SF2">
    <property type="entry name" value="LARGE RIBOSOMAL SUBUNIT PROTEIN UL30M"/>
    <property type="match status" value="1"/>
</dbReference>
<dbReference type="PANTHER" id="PTHR15892">
    <property type="entry name" value="MITOCHONDRIAL RIBOSOMAL PROTEIN L30"/>
    <property type="match status" value="1"/>
</dbReference>
<dbReference type="Pfam" id="PF00327">
    <property type="entry name" value="Ribosomal_L30"/>
    <property type="match status" value="1"/>
</dbReference>
<dbReference type="PIRSF" id="PIRSF002211">
    <property type="entry name" value="Ribosomal_L30_bac-type"/>
    <property type="match status" value="1"/>
</dbReference>
<dbReference type="SUPFAM" id="SSF55129">
    <property type="entry name" value="Ribosomal protein L30p/L7e"/>
    <property type="match status" value="1"/>
</dbReference>
<evidence type="ECO:0000255" key="1">
    <source>
        <dbReference type="HAMAP-Rule" id="MF_01371"/>
    </source>
</evidence>
<evidence type="ECO:0000305" key="2"/>
<organism>
    <name type="scientific">Francisella tularensis subsp. tularensis (strain SCHU S4 / Schu 4)</name>
    <dbReference type="NCBI Taxonomy" id="177416"/>
    <lineage>
        <taxon>Bacteria</taxon>
        <taxon>Pseudomonadati</taxon>
        <taxon>Pseudomonadota</taxon>
        <taxon>Gammaproteobacteria</taxon>
        <taxon>Thiotrichales</taxon>
        <taxon>Francisellaceae</taxon>
        <taxon>Francisella</taxon>
    </lineage>
</organism>
<proteinExistence type="inferred from homology"/>
<feature type="chain" id="PRO_0000273788" description="Large ribosomal subunit protein uL30">
    <location>
        <begin position="1"/>
        <end position="61"/>
    </location>
</feature>
<reference key="1">
    <citation type="journal article" date="2005" name="Nat. Genet.">
        <title>The complete genome sequence of Francisella tularensis, the causative agent of tularemia.</title>
        <authorList>
            <person name="Larsson P."/>
            <person name="Oyston P.C.F."/>
            <person name="Chain P."/>
            <person name="Chu M.C."/>
            <person name="Duffield M."/>
            <person name="Fuxelius H.-H."/>
            <person name="Garcia E."/>
            <person name="Haelltorp G."/>
            <person name="Johansson D."/>
            <person name="Isherwood K.E."/>
            <person name="Karp P.D."/>
            <person name="Larsson E."/>
            <person name="Liu Y."/>
            <person name="Michell S."/>
            <person name="Prior J."/>
            <person name="Prior R."/>
            <person name="Malfatti S."/>
            <person name="Sjoestedt A."/>
            <person name="Svensson K."/>
            <person name="Thompson N."/>
            <person name="Vergez L."/>
            <person name="Wagg J.K."/>
            <person name="Wren B.W."/>
            <person name="Lindler L.E."/>
            <person name="Andersson S.G.E."/>
            <person name="Forsman M."/>
            <person name="Titball R.W."/>
        </authorList>
    </citation>
    <scope>NUCLEOTIDE SEQUENCE [LARGE SCALE GENOMIC DNA]</scope>
    <source>
        <strain>SCHU S4 / Schu 4</strain>
    </source>
</reference>
<sequence length="61" mass="6871">MTQAKTFKVTLVKSLIGRKENHIASARGLGLRKINHTVEVLDTPENRGMANKIYYMVKIEG</sequence>
<protein>
    <recommendedName>
        <fullName evidence="1">Large ribosomal subunit protein uL30</fullName>
    </recommendedName>
    <alternativeName>
        <fullName evidence="2">50S ribosomal protein L30</fullName>
    </alternativeName>
</protein>
<comment type="subunit">
    <text evidence="1">Part of the 50S ribosomal subunit.</text>
</comment>
<comment type="similarity">
    <text evidence="1">Belongs to the universal ribosomal protein uL30 family.</text>
</comment>
<accession>Q5NHV0</accession>
<keyword id="KW-1185">Reference proteome</keyword>
<keyword id="KW-0687">Ribonucleoprotein</keyword>
<keyword id="KW-0689">Ribosomal protein</keyword>
<name>RL30_FRATT</name>
<gene>
    <name evidence="1" type="primary">rpmD</name>
    <name type="ordered locus">FTT_0343</name>
</gene>